<sequence length="202" mass="22710">MTGDFAFVDELVSGIRWDAKYATWDNFTGKPVDGYLANRIVGTKALCAALGRAQERAEDLGFGLLLWDGYRPQRAVDCFLRWSQQPEDGRTKARHYPNIGRAEMFDRGYVAARSGHSRGATVDLTLYHLTTGELAAMGGGHDLMDPISHHDARDVPRAEAANRRHLRSIMAACGFASYACEWWHYTLKEEPHPDTYFDFPIA</sequence>
<keyword id="KW-0046">Antibiotic resistance</keyword>
<keyword id="KW-0961">Cell wall biogenesis/degradation</keyword>
<keyword id="KW-0224">Dipeptidase</keyword>
<keyword id="KW-0378">Hydrolase</keyword>
<keyword id="KW-0479">Metal-binding</keyword>
<keyword id="KW-0482">Metalloprotease</keyword>
<keyword id="KW-0645">Protease</keyword>
<keyword id="KW-1185">Reference proteome</keyword>
<keyword id="KW-0862">Zinc</keyword>
<comment type="function">
    <text evidence="1 2">Catalyzes hydrolysis of the D-alanyl-D-alanine dipeptide. May play a role in immunity or defense against glycopeptide antibiotics (perhaps at a moderate level) in the soil environment. Might confer vancomycin resistance to S.coelicolor.</text>
</comment>
<comment type="catalytic activity">
    <reaction evidence="1 2">
        <text>D-alanyl-D-alanine + H2O = 2 D-alanine</text>
        <dbReference type="Rhea" id="RHEA:20661"/>
        <dbReference type="ChEBI" id="CHEBI:15377"/>
        <dbReference type="ChEBI" id="CHEBI:57416"/>
        <dbReference type="ChEBI" id="CHEBI:57822"/>
        <dbReference type="EC" id="3.4.13.22"/>
    </reaction>
</comment>
<comment type="cofactor">
    <cofactor evidence="1">
        <name>Zn(2+)</name>
        <dbReference type="ChEBI" id="CHEBI:29105"/>
    </cofactor>
    <text evidence="1">Binds 1 zinc ion per subunit.</text>
</comment>
<comment type="similarity">
    <text evidence="1">Belongs to the peptidase M15D family.</text>
</comment>
<name>VANX_STRCO</name>
<accession>Q9XAK6</accession>
<reference key="1">
    <citation type="journal article" date="2002" name="Res. Microbiol.">
        <title>Molecular cloning and functional characterisation of VanX, a D-alanyl-D-alanine dipeptidase from Streptomyces coelicolor A3(2).</title>
        <authorList>
            <person name="Tan A.L."/>
            <person name="Loke P."/>
            <person name="Sim T.-S."/>
        </authorList>
    </citation>
    <scope>NUCLEOTIDE SEQUENCE [GENOMIC DNA]</scope>
    <scope>FUNCTION</scope>
    <scope>CATALYTIC ACTIVITY</scope>
    <source>
        <strain>A3(2) / NRRL B-16638</strain>
    </source>
</reference>
<reference key="2">
    <citation type="journal article" date="2002" name="Nature">
        <title>Complete genome sequence of the model actinomycete Streptomyces coelicolor A3(2).</title>
        <authorList>
            <person name="Bentley S.D."/>
            <person name="Chater K.F."/>
            <person name="Cerdeno-Tarraga A.-M."/>
            <person name="Challis G.L."/>
            <person name="Thomson N.R."/>
            <person name="James K.D."/>
            <person name="Harris D.E."/>
            <person name="Quail M.A."/>
            <person name="Kieser H."/>
            <person name="Harper D."/>
            <person name="Bateman A."/>
            <person name="Brown S."/>
            <person name="Chandra G."/>
            <person name="Chen C.W."/>
            <person name="Collins M."/>
            <person name="Cronin A."/>
            <person name="Fraser A."/>
            <person name="Goble A."/>
            <person name="Hidalgo J."/>
            <person name="Hornsby T."/>
            <person name="Howarth S."/>
            <person name="Huang C.-H."/>
            <person name="Kieser T."/>
            <person name="Larke L."/>
            <person name="Murphy L.D."/>
            <person name="Oliver K."/>
            <person name="O'Neil S."/>
            <person name="Rabbinowitsch E."/>
            <person name="Rajandream M.A."/>
            <person name="Rutherford K.M."/>
            <person name="Rutter S."/>
            <person name="Seeger K."/>
            <person name="Saunders D."/>
            <person name="Sharp S."/>
            <person name="Squares R."/>
            <person name="Squares S."/>
            <person name="Taylor K."/>
            <person name="Warren T."/>
            <person name="Wietzorrek A."/>
            <person name="Woodward J.R."/>
            <person name="Barrell B.G."/>
            <person name="Parkhill J."/>
            <person name="Hopwood D.A."/>
        </authorList>
    </citation>
    <scope>NUCLEOTIDE SEQUENCE [LARGE SCALE GENOMIC DNA]</scope>
    <source>
        <strain>ATCC BAA-471 / A3(2) / M145</strain>
    </source>
</reference>
<gene>
    <name type="primary">vanX</name>
    <name type="ordered locus">SCO3596</name>
    <name type="ORF">SC66T3.07</name>
</gene>
<proteinExistence type="evidence at protein level"/>
<feature type="chain" id="PRO_0000217841" description="D-alanyl-D-alanine dipeptidase">
    <location>
        <begin position="1"/>
        <end position="202"/>
    </location>
</feature>
<feature type="active site" description="Proton donor/acceptor" evidence="1">
    <location>
        <position position="181"/>
    </location>
</feature>
<feature type="binding site" evidence="1">
    <location>
        <position position="116"/>
    </location>
    <ligand>
        <name>Zn(2+)</name>
        <dbReference type="ChEBI" id="CHEBI:29105"/>
        <note>catalytic</note>
    </ligand>
</feature>
<feature type="binding site" evidence="1">
    <location>
        <position position="123"/>
    </location>
    <ligand>
        <name>Zn(2+)</name>
        <dbReference type="ChEBI" id="CHEBI:29105"/>
        <note>catalytic</note>
    </ligand>
</feature>
<feature type="binding site" evidence="1">
    <location>
        <position position="184"/>
    </location>
    <ligand>
        <name>Zn(2+)</name>
        <dbReference type="ChEBI" id="CHEBI:29105"/>
        <note>catalytic</note>
    </ligand>
</feature>
<feature type="site" description="Transition state stabilizer" evidence="1">
    <location>
        <position position="71"/>
    </location>
</feature>
<evidence type="ECO:0000255" key="1">
    <source>
        <dbReference type="HAMAP-Rule" id="MF_01924"/>
    </source>
</evidence>
<evidence type="ECO:0000269" key="2">
    <source>
    </source>
</evidence>
<organism>
    <name type="scientific">Streptomyces coelicolor (strain ATCC BAA-471 / A3(2) / M145)</name>
    <dbReference type="NCBI Taxonomy" id="100226"/>
    <lineage>
        <taxon>Bacteria</taxon>
        <taxon>Bacillati</taxon>
        <taxon>Actinomycetota</taxon>
        <taxon>Actinomycetes</taxon>
        <taxon>Kitasatosporales</taxon>
        <taxon>Streptomycetaceae</taxon>
        <taxon>Streptomyces</taxon>
        <taxon>Streptomyces albidoflavus group</taxon>
    </lineage>
</organism>
<protein>
    <recommendedName>
        <fullName evidence="1">D-alanyl-D-alanine dipeptidase</fullName>
        <shortName evidence="1">D-Ala-D-Ala dipeptidase</shortName>
        <ecNumber evidence="1">3.4.13.22</ecNumber>
    </recommendedName>
</protein>
<dbReference type="EC" id="3.4.13.22" evidence="1"/>
<dbReference type="EMBL" id="AF367376">
    <property type="protein sequence ID" value="AAK52963.1"/>
    <property type="molecule type" value="Genomic_DNA"/>
</dbReference>
<dbReference type="EMBL" id="AL939117">
    <property type="protein sequence ID" value="CAB45463.1"/>
    <property type="molecule type" value="Genomic_DNA"/>
</dbReference>
<dbReference type="PIR" id="T35364">
    <property type="entry name" value="T35364"/>
</dbReference>
<dbReference type="RefSeq" id="NP_627791.1">
    <property type="nucleotide sequence ID" value="NC_003888.3"/>
</dbReference>
<dbReference type="RefSeq" id="WP_011029111.1">
    <property type="nucleotide sequence ID" value="NZ_VNID01000003.1"/>
</dbReference>
<dbReference type="SMR" id="Q9XAK6"/>
<dbReference type="FunCoup" id="Q9XAK6">
    <property type="interactions" value="58"/>
</dbReference>
<dbReference type="STRING" id="100226.gene:17761219"/>
<dbReference type="MEROPS" id="M15.011"/>
<dbReference type="PaxDb" id="100226-SCO3596"/>
<dbReference type="KEGG" id="sco:SCO3596"/>
<dbReference type="PATRIC" id="fig|100226.15.peg.3653"/>
<dbReference type="eggNOG" id="COG2173">
    <property type="taxonomic scope" value="Bacteria"/>
</dbReference>
<dbReference type="HOGENOM" id="CLU_060744_0_1_11"/>
<dbReference type="InParanoid" id="Q9XAK6"/>
<dbReference type="OrthoDB" id="9801430at2"/>
<dbReference type="PhylomeDB" id="Q9XAK6"/>
<dbReference type="BRENDA" id="3.4.13.22">
    <property type="organism ID" value="5998"/>
</dbReference>
<dbReference type="Proteomes" id="UP000001973">
    <property type="component" value="Chromosome"/>
</dbReference>
<dbReference type="GO" id="GO:0160237">
    <property type="term" value="F:D-Ala-D-Ala dipeptidase activity"/>
    <property type="evidence" value="ECO:0007669"/>
    <property type="project" value="UniProtKB-EC"/>
</dbReference>
<dbReference type="GO" id="GO:0008237">
    <property type="term" value="F:metallopeptidase activity"/>
    <property type="evidence" value="ECO:0007669"/>
    <property type="project" value="UniProtKB-KW"/>
</dbReference>
<dbReference type="GO" id="GO:0008270">
    <property type="term" value="F:zinc ion binding"/>
    <property type="evidence" value="ECO:0007669"/>
    <property type="project" value="UniProtKB-UniRule"/>
</dbReference>
<dbReference type="GO" id="GO:0071555">
    <property type="term" value="P:cell wall organization"/>
    <property type="evidence" value="ECO:0007669"/>
    <property type="project" value="UniProtKB-KW"/>
</dbReference>
<dbReference type="GO" id="GO:0006508">
    <property type="term" value="P:proteolysis"/>
    <property type="evidence" value="ECO:0007669"/>
    <property type="project" value="UniProtKB-KW"/>
</dbReference>
<dbReference type="GO" id="GO:0046677">
    <property type="term" value="P:response to antibiotic"/>
    <property type="evidence" value="ECO:0007669"/>
    <property type="project" value="UniProtKB-KW"/>
</dbReference>
<dbReference type="CDD" id="cd14817">
    <property type="entry name" value="D-Ala-D-Ala_dipeptidase_VanX"/>
    <property type="match status" value="1"/>
</dbReference>
<dbReference type="Gene3D" id="3.30.1380.10">
    <property type="match status" value="1"/>
</dbReference>
<dbReference type="HAMAP" id="MF_01924">
    <property type="entry name" value="A_A_dipeptidase"/>
    <property type="match status" value="1"/>
</dbReference>
<dbReference type="InterPro" id="IPR000755">
    <property type="entry name" value="A_A_dipeptidase"/>
</dbReference>
<dbReference type="InterPro" id="IPR009045">
    <property type="entry name" value="Hedgehog_sig/DD-Pept_Zn-bd_sf"/>
</dbReference>
<dbReference type="NCBIfam" id="NF033115">
    <property type="entry name" value="dipept_VanX"/>
    <property type="match status" value="1"/>
</dbReference>
<dbReference type="PANTHER" id="PTHR43126">
    <property type="entry name" value="D-ALANYL-D-ALANINE DIPEPTIDASE"/>
    <property type="match status" value="1"/>
</dbReference>
<dbReference type="PANTHER" id="PTHR43126:SF1">
    <property type="entry name" value="D-ALANYL-D-ALANINE DIPEPTIDASE"/>
    <property type="match status" value="1"/>
</dbReference>
<dbReference type="Pfam" id="PF01427">
    <property type="entry name" value="Peptidase_M15"/>
    <property type="match status" value="1"/>
</dbReference>
<dbReference type="PIRSF" id="PIRSF026671">
    <property type="entry name" value="AA_dipeptidase"/>
    <property type="match status" value="1"/>
</dbReference>
<dbReference type="SUPFAM" id="SSF55166">
    <property type="entry name" value="Hedgehog/DD-peptidase"/>
    <property type="match status" value="1"/>
</dbReference>